<comment type="function">
    <text evidence="1 2">Adapter protein for the cul3 E3 ubiquitin-protein ligase complex (By similarity). Involved in late neuronal development and muscle formation (By similarity).</text>
</comment>
<comment type="subunit">
    <text evidence="2">Homodimer and heterodimer. Interacts with cul3 via the BTB domain.</text>
</comment>
<comment type="subcellular location">
    <subcellularLocation>
        <location evidence="2">Cytoplasm</location>
    </subcellularLocation>
    <text evidence="2">Found in punctated bodies in the cytoplasm.</text>
</comment>
<comment type="sequence caution" evidence="4">
    <conflict type="erroneous initiation">
        <sequence resource="EMBL-CDS" id="AAI21369"/>
    </conflict>
</comment>
<reference key="1">
    <citation type="submission" date="2006-08" db="EMBL/GenBank/DDBJ databases">
        <authorList>
            <consortium name="NIH - Xenopus Gene Collection (XGC) project"/>
        </authorList>
    </citation>
    <scope>NUCLEOTIDE SEQUENCE [LARGE SCALE MRNA]</scope>
    <source>
        <tissue>Brain</tissue>
    </source>
</reference>
<sequence>MPLDPGCLNGRVMKCLTFFLLLPETLKKSRKSARAQGKVQACYEIVPLALKKKMAAELYPASANTNIANSNAAANAKKNALQLQQAAPPPPQLHNLNNNNIESGNWQSFHPTLRERNALMFNNELMADVHFIVGPAGASKKVPVHKYILAVGSSVFYAMFYGDLAEVKSEIHIPDVEPAAFLILLKYLYSDEIDLEADTVLATLYAAKKYIVPALAKACVNFLETSLEAKNACVLLSQSRLFEEPDLTLRCWEVIDAQAELALKSEGFCEIDLQTLEIIVTRETLNTKEDVVFEAVLNWAEAECKRQGLSITPVNKRNVLGKALYLVRIPTMTLEEFANGAAQSDILTLEETRSIFLWYTAANKPQLEFPLIKRKGLAPQRCHRFQSSAYRSNQWRYRGRCDSIQFAVDKRIFIAGLGLYGSSCGKAEYSVKIELKRQGAVLAQNLTKFVSDGSSNTFSVWFEHPVQVEQDTFYTVSAILDGNELSYFGQEGMTEVQCGKVTFQFQCSSDSTNGTGVQGGQIPELIFYA</sequence>
<accession>Q0V9W6</accession>
<gene>
    <name type="primary">btbd6</name>
</gene>
<protein>
    <recommendedName>
        <fullName>BTB/POZ domain-containing protein 6</fullName>
    </recommendedName>
</protein>
<organism>
    <name type="scientific">Xenopus tropicalis</name>
    <name type="common">Western clawed frog</name>
    <name type="synonym">Silurana tropicalis</name>
    <dbReference type="NCBI Taxonomy" id="8364"/>
    <lineage>
        <taxon>Eukaryota</taxon>
        <taxon>Metazoa</taxon>
        <taxon>Chordata</taxon>
        <taxon>Craniata</taxon>
        <taxon>Vertebrata</taxon>
        <taxon>Euteleostomi</taxon>
        <taxon>Amphibia</taxon>
        <taxon>Batrachia</taxon>
        <taxon>Anura</taxon>
        <taxon>Pipoidea</taxon>
        <taxon>Pipidae</taxon>
        <taxon>Xenopodinae</taxon>
        <taxon>Xenopus</taxon>
        <taxon>Silurana</taxon>
    </lineage>
</organism>
<keyword id="KW-0963">Cytoplasm</keyword>
<keyword id="KW-1185">Reference proteome</keyword>
<evidence type="ECO:0000250" key="1">
    <source>
        <dbReference type="UniProtKB" id="A9JRD8"/>
    </source>
</evidence>
<evidence type="ECO:0000250" key="2">
    <source>
        <dbReference type="UniProtKB" id="Q2LE78"/>
    </source>
</evidence>
<evidence type="ECO:0000255" key="3">
    <source>
        <dbReference type="PROSITE-ProRule" id="PRU00037"/>
    </source>
</evidence>
<evidence type="ECO:0000305" key="4"/>
<proteinExistence type="evidence at transcript level"/>
<dbReference type="EMBL" id="BC121368">
    <property type="protein sequence ID" value="AAI21369.1"/>
    <property type="status" value="ALT_INIT"/>
    <property type="molecule type" value="mRNA"/>
</dbReference>
<dbReference type="SMR" id="Q0V9W6"/>
<dbReference type="FunCoup" id="Q0V9W6">
    <property type="interactions" value="640"/>
</dbReference>
<dbReference type="STRING" id="8364.ENSXETP00000015189"/>
<dbReference type="PaxDb" id="8364-ENSXETP00000048825"/>
<dbReference type="eggNOG" id="KOG2075">
    <property type="taxonomic scope" value="Eukaryota"/>
</dbReference>
<dbReference type="InParanoid" id="Q0V9W6"/>
<dbReference type="Proteomes" id="UP000008143">
    <property type="component" value="Unplaced"/>
</dbReference>
<dbReference type="GO" id="GO:0005737">
    <property type="term" value="C:cytoplasm"/>
    <property type="evidence" value="ECO:0007669"/>
    <property type="project" value="UniProtKB-SubCell"/>
</dbReference>
<dbReference type="CDD" id="cd18525">
    <property type="entry name" value="BACK_BTBD6"/>
    <property type="match status" value="1"/>
</dbReference>
<dbReference type="CDD" id="cd18349">
    <property type="entry name" value="BTB_POZ_BTBD6"/>
    <property type="match status" value="1"/>
</dbReference>
<dbReference type="FunFam" id="1.25.40.420:FF:000003">
    <property type="entry name" value="BTB/POZ domain-containing protein 3"/>
    <property type="match status" value="1"/>
</dbReference>
<dbReference type="FunFam" id="2.60.120.820:FF:000001">
    <property type="entry name" value="BTB/POZ domain-containing protein 3"/>
    <property type="match status" value="1"/>
</dbReference>
<dbReference type="FunFam" id="3.30.710.10:FF:000015">
    <property type="entry name" value="BTB/POZ domain-containing protein 3"/>
    <property type="match status" value="1"/>
</dbReference>
<dbReference type="Gene3D" id="1.25.40.420">
    <property type="match status" value="1"/>
</dbReference>
<dbReference type="Gene3D" id="2.60.120.820">
    <property type="entry name" value="PHR domain"/>
    <property type="match status" value="1"/>
</dbReference>
<dbReference type="Gene3D" id="3.30.710.10">
    <property type="entry name" value="Potassium Channel Kv1.1, Chain A"/>
    <property type="match status" value="1"/>
</dbReference>
<dbReference type="InterPro" id="IPR011705">
    <property type="entry name" value="BACK"/>
</dbReference>
<dbReference type="InterPro" id="IPR000210">
    <property type="entry name" value="BTB/POZ_dom"/>
</dbReference>
<dbReference type="InterPro" id="IPR049738">
    <property type="entry name" value="BTB_POZ_BTBD6"/>
</dbReference>
<dbReference type="InterPro" id="IPR012983">
    <property type="entry name" value="PHR"/>
</dbReference>
<dbReference type="InterPro" id="IPR038648">
    <property type="entry name" value="PHR_sf"/>
</dbReference>
<dbReference type="InterPro" id="IPR011333">
    <property type="entry name" value="SKP1/BTB/POZ_sf"/>
</dbReference>
<dbReference type="PANTHER" id="PTHR45774">
    <property type="entry name" value="BTB/POZ DOMAIN-CONTAINING"/>
    <property type="match status" value="1"/>
</dbReference>
<dbReference type="PANTHER" id="PTHR45774:SF5">
    <property type="entry name" value="BTB_POZ DOMAIN-CONTAINING PROTEIN 6"/>
    <property type="match status" value="1"/>
</dbReference>
<dbReference type="Pfam" id="PF07707">
    <property type="entry name" value="BACK"/>
    <property type="match status" value="1"/>
</dbReference>
<dbReference type="Pfam" id="PF00651">
    <property type="entry name" value="BTB"/>
    <property type="match status" value="1"/>
</dbReference>
<dbReference type="Pfam" id="PF08005">
    <property type="entry name" value="PHR"/>
    <property type="match status" value="1"/>
</dbReference>
<dbReference type="SMART" id="SM00875">
    <property type="entry name" value="BACK"/>
    <property type="match status" value="1"/>
</dbReference>
<dbReference type="SMART" id="SM00225">
    <property type="entry name" value="BTB"/>
    <property type="match status" value="1"/>
</dbReference>
<dbReference type="SUPFAM" id="SSF54695">
    <property type="entry name" value="POZ domain"/>
    <property type="match status" value="1"/>
</dbReference>
<dbReference type="PROSITE" id="PS50097">
    <property type="entry name" value="BTB"/>
    <property type="match status" value="1"/>
</dbReference>
<feature type="chain" id="PRO_0000380251" description="BTB/POZ domain-containing protein 6">
    <location>
        <begin position="1"/>
        <end position="529"/>
    </location>
</feature>
<feature type="domain" description="BTB" evidence="3">
    <location>
        <begin position="127"/>
        <end position="197"/>
    </location>
</feature>
<name>BTBD6_XENTR</name>